<organism>
    <name type="scientific">Arabidopsis thaliana</name>
    <name type="common">Mouse-ear cress</name>
    <dbReference type="NCBI Taxonomy" id="3702"/>
    <lineage>
        <taxon>Eukaryota</taxon>
        <taxon>Viridiplantae</taxon>
        <taxon>Streptophyta</taxon>
        <taxon>Embryophyta</taxon>
        <taxon>Tracheophyta</taxon>
        <taxon>Spermatophyta</taxon>
        <taxon>Magnoliopsida</taxon>
        <taxon>eudicotyledons</taxon>
        <taxon>Gunneridae</taxon>
        <taxon>Pentapetalae</taxon>
        <taxon>rosids</taxon>
        <taxon>malvids</taxon>
        <taxon>Brassicales</taxon>
        <taxon>Brassicaceae</taxon>
        <taxon>Camelineae</taxon>
        <taxon>Arabidopsis</taxon>
    </lineage>
</organism>
<evidence type="ECO:0000250" key="1">
    <source>
        <dbReference type="UniProtKB" id="Q9ZU34"/>
    </source>
</evidence>
<evidence type="ECO:0000255" key="2"/>
<evidence type="ECO:0000269" key="3">
    <source>
    </source>
</evidence>
<evidence type="ECO:0000303" key="4">
    <source>
    </source>
</evidence>
<evidence type="ECO:0000312" key="5">
    <source>
        <dbReference type="Araport" id="AT3G18060"/>
    </source>
</evidence>
<evidence type="ECO:0000312" key="6">
    <source>
        <dbReference type="EMBL" id="BAB02018.1"/>
    </source>
</evidence>
<name>AIP12_ARATH</name>
<protein>
    <recommendedName>
        <fullName evidence="4">Actin-interacting protein 1-2</fullName>
    </recommendedName>
</protein>
<sequence>MELSETYACVPSTERGRGILISGNSKSDTILYTNGRSVVTLDLNNPLKVSIYGEHAYPATVARYSPNGEWIASGDVSGTVRIWGAYNDHVLKNEFKVLAGRIDDLQWSADGMRIVASGDGKGKSLVRAFMWDSGSNVGEFDGHSRRVLSCAIKPTRPFRIVTCGEDFLVNFYEGPPFKFKLSSREHSNFVNCVRFAPDGSKFITVSSDKKGIIYDGKTCEILGELSSDDGHKGSIYAVSWSPDGKQVLTVSADKSAKIWDISDNGSGSLNTTLNCPGSSGGVDDMLVGCLWQNDHIVTVSLGGTISIFSASDLDKSPFQFSGHMKNVSSLAVLKGNADYILSGSYDGLICKWMLGRGFCGKLQRTQNSQIKCFAAHEEEIVTSGYDNKISRISYKDDQCTNEESIDIGNQPKDLSLAPLSPDLLLVTFESGVVFLRDGKVVSTINLGFIVTALAVTPDGTEAVIGGQDGKLHLYSINGDSLTEEAVLERHRGAISVIRYSPDLSMFASADLNREAVVWDRVSREMKLKNMLYHSARINCLAWSPNSTMVATGSLDTCVIVYEVDKPASSRMTIKGAHLGGVYGLGFADDSHVVSSGEDACIRVWSFTPQ</sequence>
<proteinExistence type="evidence at transcript level"/>
<gene>
    <name evidence="4" type="primary">AIP1-2</name>
    <name evidence="5" type="ordered locus">At3g18060</name>
    <name evidence="6" type="ORF">MRC8.4</name>
</gene>
<keyword id="KW-0009">Actin-binding</keyword>
<keyword id="KW-1185">Reference proteome</keyword>
<keyword id="KW-0677">Repeat</keyword>
<keyword id="KW-0853">WD repeat</keyword>
<feature type="chain" id="PRO_0000436136" description="Actin-interacting protein 1-2">
    <location>
        <begin position="1"/>
        <end position="609"/>
    </location>
</feature>
<feature type="repeat" description="WD 1" evidence="2">
    <location>
        <begin position="2"/>
        <end position="42"/>
    </location>
</feature>
<feature type="repeat" description="WD 2" evidence="2">
    <location>
        <begin position="54"/>
        <end position="93"/>
    </location>
</feature>
<feature type="repeat" description="WD 3" evidence="2">
    <location>
        <begin position="97"/>
        <end position="141"/>
    </location>
</feature>
<feature type="repeat" description="WD 4" evidence="2">
    <location>
        <begin position="142"/>
        <end position="182"/>
    </location>
</feature>
<feature type="repeat" description="WD 5" evidence="2">
    <location>
        <begin position="185"/>
        <end position="224"/>
    </location>
</feature>
<feature type="repeat" description="WD 6" evidence="2">
    <location>
        <begin position="230"/>
        <end position="269"/>
    </location>
</feature>
<feature type="repeat" description="WD 7" evidence="2">
    <location>
        <begin position="277"/>
        <end position="318"/>
    </location>
</feature>
<feature type="repeat" description="WD 8" evidence="2">
    <location>
        <begin position="322"/>
        <end position="362"/>
    </location>
</feature>
<feature type="repeat" description="WD 9" evidence="2">
    <location>
        <begin position="445"/>
        <end position="484"/>
    </location>
</feature>
<feature type="repeat" description="WD 10" evidence="2">
    <location>
        <begin position="489"/>
        <end position="528"/>
    </location>
</feature>
<feature type="repeat" description="WD 11" evidence="2">
    <location>
        <begin position="532"/>
        <end position="571"/>
    </location>
</feature>
<feature type="repeat" description="WD 12" evidence="2">
    <location>
        <begin position="576"/>
        <end position="609"/>
    </location>
</feature>
<dbReference type="EMBL" id="AB020749">
    <property type="protein sequence ID" value="BAB02018.1"/>
    <property type="molecule type" value="Genomic_DNA"/>
</dbReference>
<dbReference type="EMBL" id="CP002686">
    <property type="protein sequence ID" value="AEE76041.1"/>
    <property type="molecule type" value="Genomic_DNA"/>
</dbReference>
<dbReference type="EMBL" id="AY062436">
    <property type="protein sequence ID" value="AAL32514.1"/>
    <property type="molecule type" value="mRNA"/>
</dbReference>
<dbReference type="EMBL" id="AY114624">
    <property type="protein sequence ID" value="AAM47943.1"/>
    <property type="molecule type" value="mRNA"/>
</dbReference>
<dbReference type="RefSeq" id="NP_188434.2">
    <property type="nucleotide sequence ID" value="NM_112688.6"/>
</dbReference>
<dbReference type="SMR" id="Q9LV35"/>
<dbReference type="FunCoup" id="Q9LV35">
    <property type="interactions" value="3547"/>
</dbReference>
<dbReference type="IntAct" id="Q9LV35">
    <property type="interactions" value="4"/>
</dbReference>
<dbReference type="STRING" id="3702.Q9LV35"/>
<dbReference type="PaxDb" id="3702-AT3G18060.1"/>
<dbReference type="ProteomicsDB" id="244888"/>
<dbReference type="EnsemblPlants" id="AT3G18060.1">
    <property type="protein sequence ID" value="AT3G18060.1"/>
    <property type="gene ID" value="AT3G18060"/>
</dbReference>
<dbReference type="GeneID" id="821331"/>
<dbReference type="Gramene" id="AT3G18060.1">
    <property type="protein sequence ID" value="AT3G18060.1"/>
    <property type="gene ID" value="AT3G18060"/>
</dbReference>
<dbReference type="KEGG" id="ath:AT3G18060"/>
<dbReference type="Araport" id="AT3G18060"/>
<dbReference type="TAIR" id="AT3G18060"/>
<dbReference type="eggNOG" id="KOG0318">
    <property type="taxonomic scope" value="Eukaryota"/>
</dbReference>
<dbReference type="HOGENOM" id="CLU_015246_2_0_1"/>
<dbReference type="InParanoid" id="Q9LV35"/>
<dbReference type="OMA" id="FYQGPPF"/>
<dbReference type="OrthoDB" id="2306at2759"/>
<dbReference type="PhylomeDB" id="Q9LV35"/>
<dbReference type="CD-CODE" id="4299E36E">
    <property type="entry name" value="Nucleolus"/>
</dbReference>
<dbReference type="PRO" id="PR:Q9LV35"/>
<dbReference type="Proteomes" id="UP000006548">
    <property type="component" value="Chromosome 3"/>
</dbReference>
<dbReference type="ExpressionAtlas" id="Q9LV35">
    <property type="expression patterns" value="baseline and differential"/>
</dbReference>
<dbReference type="GO" id="GO:0080008">
    <property type="term" value="C:Cul4-RING E3 ubiquitin ligase complex"/>
    <property type="evidence" value="ECO:0000250"/>
    <property type="project" value="TAIR"/>
</dbReference>
<dbReference type="GO" id="GO:0005829">
    <property type="term" value="C:cytosol"/>
    <property type="evidence" value="ECO:0007005"/>
    <property type="project" value="TAIR"/>
</dbReference>
<dbReference type="GO" id="GO:0003779">
    <property type="term" value="F:actin binding"/>
    <property type="evidence" value="ECO:0007669"/>
    <property type="project" value="UniProtKB-KW"/>
</dbReference>
<dbReference type="CDD" id="cd00200">
    <property type="entry name" value="WD40"/>
    <property type="match status" value="1"/>
</dbReference>
<dbReference type="FunFam" id="2.130.10.10:FF:000102">
    <property type="entry name" value="Actin-interacting protein 1"/>
    <property type="match status" value="1"/>
</dbReference>
<dbReference type="FunFam" id="2.130.10.10:FF:000167">
    <property type="entry name" value="Actin-interacting protein 1"/>
    <property type="match status" value="1"/>
</dbReference>
<dbReference type="Gene3D" id="2.130.10.10">
    <property type="entry name" value="YVTN repeat-like/Quinoprotein amine dehydrogenase"/>
    <property type="match status" value="2"/>
</dbReference>
<dbReference type="InterPro" id="IPR011045">
    <property type="entry name" value="N2O_reductase_N"/>
</dbReference>
<dbReference type="InterPro" id="IPR015943">
    <property type="entry name" value="WD40/YVTN_repeat-like_dom_sf"/>
</dbReference>
<dbReference type="InterPro" id="IPR019775">
    <property type="entry name" value="WD40_repeat_CS"/>
</dbReference>
<dbReference type="InterPro" id="IPR036322">
    <property type="entry name" value="WD40_repeat_dom_sf"/>
</dbReference>
<dbReference type="InterPro" id="IPR001680">
    <property type="entry name" value="WD40_rpt"/>
</dbReference>
<dbReference type="PANTHER" id="PTHR19856:SF0">
    <property type="entry name" value="WD REPEAT-CONTAINING PROTEIN 1"/>
    <property type="match status" value="1"/>
</dbReference>
<dbReference type="PANTHER" id="PTHR19856">
    <property type="entry name" value="WD-REPEATCONTAINING PROTEIN WDR1"/>
    <property type="match status" value="1"/>
</dbReference>
<dbReference type="Pfam" id="PF00400">
    <property type="entry name" value="WD40"/>
    <property type="match status" value="8"/>
</dbReference>
<dbReference type="SMART" id="SM00320">
    <property type="entry name" value="WD40"/>
    <property type="match status" value="11"/>
</dbReference>
<dbReference type="SUPFAM" id="SSF50974">
    <property type="entry name" value="Nitrous oxide reductase, N-terminal domain"/>
    <property type="match status" value="1"/>
</dbReference>
<dbReference type="SUPFAM" id="SSF50978">
    <property type="entry name" value="WD40 repeat-like"/>
    <property type="match status" value="1"/>
</dbReference>
<dbReference type="PROSITE" id="PS00678">
    <property type="entry name" value="WD_REPEATS_1"/>
    <property type="match status" value="1"/>
</dbReference>
<dbReference type="PROSITE" id="PS50082">
    <property type="entry name" value="WD_REPEATS_2"/>
    <property type="match status" value="6"/>
</dbReference>
<dbReference type="PROSITE" id="PS50294">
    <property type="entry name" value="WD_REPEATS_REGION"/>
    <property type="match status" value="1"/>
</dbReference>
<reference key="1">
    <citation type="journal article" date="2000" name="DNA Res.">
        <title>Structural analysis of Arabidopsis thaliana chromosome 3. II. Sequence features of the 4,251,695 bp regions covered by 90 P1, TAC and BAC clones.</title>
        <authorList>
            <person name="Kaneko T."/>
            <person name="Katoh T."/>
            <person name="Sato S."/>
            <person name="Nakamura Y."/>
            <person name="Asamizu E."/>
            <person name="Tabata S."/>
        </authorList>
    </citation>
    <scope>NUCLEOTIDE SEQUENCE [LARGE SCALE GENOMIC DNA]</scope>
    <source>
        <strain>cv. Columbia</strain>
    </source>
</reference>
<reference key="2">
    <citation type="journal article" date="2017" name="Plant J.">
        <title>Araport11: a complete reannotation of the Arabidopsis thaliana reference genome.</title>
        <authorList>
            <person name="Cheng C.Y."/>
            <person name="Krishnakumar V."/>
            <person name="Chan A.P."/>
            <person name="Thibaud-Nissen F."/>
            <person name="Schobel S."/>
            <person name="Town C.D."/>
        </authorList>
    </citation>
    <scope>GENOME REANNOTATION</scope>
    <source>
        <strain>cv. Columbia</strain>
    </source>
</reference>
<reference key="3">
    <citation type="journal article" date="2003" name="Science">
        <title>Empirical analysis of transcriptional activity in the Arabidopsis genome.</title>
        <authorList>
            <person name="Yamada K."/>
            <person name="Lim J."/>
            <person name="Dale J.M."/>
            <person name="Chen H."/>
            <person name="Shinn P."/>
            <person name="Palm C.J."/>
            <person name="Southwick A.M."/>
            <person name="Wu H.C."/>
            <person name="Kim C.J."/>
            <person name="Nguyen M."/>
            <person name="Pham P.K."/>
            <person name="Cheuk R.F."/>
            <person name="Karlin-Newmann G."/>
            <person name="Liu S.X."/>
            <person name="Lam B."/>
            <person name="Sakano H."/>
            <person name="Wu T."/>
            <person name="Yu G."/>
            <person name="Miranda M."/>
            <person name="Quach H.L."/>
            <person name="Tripp M."/>
            <person name="Chang C.H."/>
            <person name="Lee J.M."/>
            <person name="Toriumi M.J."/>
            <person name="Chan M.M."/>
            <person name="Tang C.C."/>
            <person name="Onodera C.S."/>
            <person name="Deng J.M."/>
            <person name="Akiyama K."/>
            <person name="Ansari Y."/>
            <person name="Arakawa T."/>
            <person name="Banh J."/>
            <person name="Banno F."/>
            <person name="Bowser L."/>
            <person name="Brooks S.Y."/>
            <person name="Carninci P."/>
            <person name="Chao Q."/>
            <person name="Choy N."/>
            <person name="Enju A."/>
            <person name="Goldsmith A.D."/>
            <person name="Gurjal M."/>
            <person name="Hansen N.F."/>
            <person name="Hayashizaki Y."/>
            <person name="Johnson-Hopson C."/>
            <person name="Hsuan V.W."/>
            <person name="Iida K."/>
            <person name="Karnes M."/>
            <person name="Khan S."/>
            <person name="Koesema E."/>
            <person name="Ishida J."/>
            <person name="Jiang P.X."/>
            <person name="Jones T."/>
            <person name="Kawai J."/>
            <person name="Kamiya A."/>
            <person name="Meyers C."/>
            <person name="Nakajima M."/>
            <person name="Narusaka M."/>
            <person name="Seki M."/>
            <person name="Sakurai T."/>
            <person name="Satou M."/>
            <person name="Tamse R."/>
            <person name="Vaysberg M."/>
            <person name="Wallender E.K."/>
            <person name="Wong C."/>
            <person name="Yamamura Y."/>
            <person name="Yuan S."/>
            <person name="Shinozaki K."/>
            <person name="Davis R.W."/>
            <person name="Theologis A."/>
            <person name="Ecker J.R."/>
        </authorList>
    </citation>
    <scope>NUCLEOTIDE SEQUENCE [LARGE SCALE MRNA]</scope>
    <source>
        <strain>cv. Columbia</strain>
    </source>
</reference>
<reference key="4">
    <citation type="journal article" date="2002" name="Plant Cell">
        <title>Regulation of the pollen-specific actin-depolymerizing factor LlADF1.</title>
        <authorList>
            <person name="Allwood E.G."/>
            <person name="Anthony R.G."/>
            <person name="Smertenko A.P."/>
            <person name="Reichelt S."/>
            <person name="Drobak B.K."/>
            <person name="Doonan J.H."/>
            <person name="Weeds A.G."/>
            <person name="Hussey P.J."/>
        </authorList>
    </citation>
    <scope>TISSUE SPECIFICITY</scope>
</reference>
<accession>Q9LV35</accession>
<comment type="function">
    <text evidence="1">Binds actin. Enhances the F-actin depolymerization activity of actin-depolymerizing factor (ADF) proteins.</text>
</comment>
<comment type="tissue specificity">
    <text evidence="3">Expressed in leaves, stems, flower buds and flowers.</text>
</comment>